<accession>O93452</accession>
<feature type="signal peptide" evidence="2">
    <location>
        <begin position="1"/>
        <end position="22"/>
    </location>
</feature>
<feature type="propeptide" id="PRO_0000007079" evidence="5">
    <location>
        <begin position="23"/>
        <end position="42"/>
    </location>
</feature>
<feature type="peptide" id="PRO_0000007080" description="Dermaseptin-DA2" evidence="6">
    <location>
        <begin position="45"/>
        <end position="75"/>
    </location>
</feature>
<evidence type="ECO:0000250" key="1"/>
<evidence type="ECO:0000255" key="2"/>
<evidence type="ECO:0000303" key="3">
    <source>
    </source>
</evidence>
<evidence type="ECO:0000303" key="4">
    <source>
    </source>
</evidence>
<evidence type="ECO:0000305" key="5"/>
<evidence type="ECO:0000305" key="6">
    <source>
    </source>
</evidence>
<dbReference type="EMBL" id="AJ005190">
    <property type="protein sequence ID" value="CAA06427.1"/>
    <property type="molecule type" value="mRNA"/>
</dbReference>
<dbReference type="GO" id="GO:0005576">
    <property type="term" value="C:extracellular region"/>
    <property type="evidence" value="ECO:0007669"/>
    <property type="project" value="UniProtKB-SubCell"/>
</dbReference>
<dbReference type="GO" id="GO:0042742">
    <property type="term" value="P:defense response to bacterium"/>
    <property type="evidence" value="ECO:0007669"/>
    <property type="project" value="UniProtKB-KW"/>
</dbReference>
<dbReference type="InterPro" id="IPR022731">
    <property type="entry name" value="Dermaseptin_dom"/>
</dbReference>
<dbReference type="InterPro" id="IPR004275">
    <property type="entry name" value="Frog_antimicrobial_propeptide"/>
</dbReference>
<dbReference type="InterPro" id="IPR016322">
    <property type="entry name" value="FSAP"/>
</dbReference>
<dbReference type="Pfam" id="PF12121">
    <property type="entry name" value="DD_K"/>
    <property type="match status" value="1"/>
</dbReference>
<dbReference type="Pfam" id="PF03032">
    <property type="entry name" value="FSAP_sig_propep"/>
    <property type="match status" value="1"/>
</dbReference>
<dbReference type="PIRSF" id="PIRSF001822">
    <property type="entry name" value="Dermaseptin_precursor"/>
    <property type="match status" value="1"/>
</dbReference>
<protein>
    <recommendedName>
        <fullName evidence="3">Dermaseptin-DA2</fullName>
        <shortName evidence="3">DRS-DA2</shortName>
    </recommendedName>
    <alternativeName>
        <fullName evidence="4">Dermaseptin PD-2-2</fullName>
    </alternativeName>
</protein>
<comment type="function">
    <text evidence="1">Possesses a potent antimicrobial activity against Gram-positive and Gram-negative bacteria. Probably acts by disturbing membrane functions with its amphipathic structure (By similarity).</text>
</comment>
<comment type="subcellular location">
    <subcellularLocation>
        <location evidence="6">Secreted</location>
    </subcellularLocation>
</comment>
<comment type="tissue specificity">
    <text evidence="6">Expressed by the skin glands.</text>
</comment>
<comment type="similarity">
    <text evidence="5">Belongs to the frog skin active peptide (FSAP) family. Dermaseptin subfamily.</text>
</comment>
<comment type="online information" name="The antimicrobial peptide database">
    <link uri="https://wangapd3.com/database/query_output.php?ID=0959"/>
</comment>
<organism>
    <name type="scientific">Agalychnis dacnicolor</name>
    <name type="common">Giant Mexican leaf frog</name>
    <name type="synonym">Pachymedusa dacnicolor</name>
    <dbReference type="NCBI Taxonomy" id="75988"/>
    <lineage>
        <taxon>Eukaryota</taxon>
        <taxon>Metazoa</taxon>
        <taxon>Chordata</taxon>
        <taxon>Craniata</taxon>
        <taxon>Vertebrata</taxon>
        <taxon>Euteleostomi</taxon>
        <taxon>Amphibia</taxon>
        <taxon>Batrachia</taxon>
        <taxon>Anura</taxon>
        <taxon>Neobatrachia</taxon>
        <taxon>Hyloidea</taxon>
        <taxon>Hylidae</taxon>
        <taxon>Phyllomedusinae</taxon>
        <taxon>Agalychnis</taxon>
    </lineage>
</organism>
<proteinExistence type="inferred from homology"/>
<sequence>MALVKKSLFLVLFLGLVSLSICEEKRENEDEEEQEDDEQSEEKRALWKTLLKKVGKVAGKAVLNAVTNMANQNEQ</sequence>
<name>DRS2_AGADC</name>
<reference key="1">
    <citation type="journal article" date="1998" name="Biochim. Biophys. Acta">
        <title>Cloning of cDNAs encoding new peptides of the dermaseptin-family.</title>
        <authorList>
            <person name="Wechselberger C."/>
        </authorList>
    </citation>
    <scope>NUCLEOTIDE SEQUENCE [MRNA]</scope>
    <source>
        <tissue>Skin</tissue>
    </source>
</reference>
<reference key="2">
    <citation type="journal article" date="2008" name="Peptides">
        <title>A consistent nomenclature of antimicrobial peptides isolated from frogs of the subfamily Phyllomedusinae.</title>
        <authorList>
            <person name="Amiche M."/>
            <person name="Ladram A."/>
            <person name="Nicolas P."/>
        </authorList>
    </citation>
    <scope>NOMENCLATURE</scope>
</reference>
<keyword id="KW-0878">Amphibian defense peptide</keyword>
<keyword id="KW-0044">Antibiotic</keyword>
<keyword id="KW-0929">Antimicrobial</keyword>
<keyword id="KW-0165">Cleavage on pair of basic residues</keyword>
<keyword id="KW-0964">Secreted</keyword>
<keyword id="KW-0732">Signal</keyword>